<accession>B0BV24</accession>
<gene>
    <name evidence="1" type="primary">ybeY</name>
    <name type="ordered locus">RrIowa_1350</name>
</gene>
<proteinExistence type="inferred from homology"/>
<feature type="chain" id="PRO_1000073914" description="Endoribonuclease YbeY">
    <location>
        <begin position="1"/>
        <end position="167"/>
    </location>
</feature>
<feature type="binding site" evidence="1">
    <location>
        <position position="131"/>
    </location>
    <ligand>
        <name>Zn(2+)</name>
        <dbReference type="ChEBI" id="CHEBI:29105"/>
        <note>catalytic</note>
    </ligand>
</feature>
<feature type="binding site" evidence="1">
    <location>
        <position position="135"/>
    </location>
    <ligand>
        <name>Zn(2+)</name>
        <dbReference type="ChEBI" id="CHEBI:29105"/>
        <note>catalytic</note>
    </ligand>
</feature>
<feature type="binding site" evidence="1">
    <location>
        <position position="141"/>
    </location>
    <ligand>
        <name>Zn(2+)</name>
        <dbReference type="ChEBI" id="CHEBI:29105"/>
        <note>catalytic</note>
    </ligand>
</feature>
<comment type="function">
    <text evidence="1">Single strand-specific metallo-endoribonuclease involved in late-stage 70S ribosome quality control and in maturation of the 3' terminus of the 16S rRNA.</text>
</comment>
<comment type="cofactor">
    <cofactor evidence="1">
        <name>Zn(2+)</name>
        <dbReference type="ChEBI" id="CHEBI:29105"/>
    </cofactor>
    <text evidence="1">Binds 1 zinc ion.</text>
</comment>
<comment type="subcellular location">
    <subcellularLocation>
        <location evidence="1">Cytoplasm</location>
    </subcellularLocation>
</comment>
<comment type="similarity">
    <text evidence="1">Belongs to the endoribonuclease YbeY family.</text>
</comment>
<protein>
    <recommendedName>
        <fullName evidence="1">Endoribonuclease YbeY</fullName>
        <ecNumber evidence="1">3.1.-.-</ecNumber>
    </recommendedName>
</protein>
<reference key="1">
    <citation type="journal article" date="2008" name="Infect. Immun.">
        <title>Genomic comparison of virulent Rickettsia rickettsii Sheila Smith and avirulent Rickettsia rickettsii Iowa.</title>
        <authorList>
            <person name="Ellison D.W."/>
            <person name="Clark T.R."/>
            <person name="Sturdevant D.E."/>
            <person name="Virtaneva K."/>
            <person name="Porcella S.F."/>
            <person name="Hackstadt T."/>
        </authorList>
    </citation>
    <scope>NUCLEOTIDE SEQUENCE [LARGE SCALE GENOMIC DNA]</scope>
    <source>
        <strain>Iowa</strain>
    </source>
</reference>
<name>YBEY_RICRO</name>
<sequence length="167" mass="19920">MINVEIVRHYNKWREHKQINKSLIKKITQNILLRFDNFSKIKQFELSILLTNAAEILILNKQFRNIEKATNVLSFPSNELNWQDLYSKLEFLGDSDYMHLGDIAFCYEVIYNESCEQHKTFENHFIHLLIHSILHLIGFDHQNDTEANIMENLEIEILSYFGIFPPY</sequence>
<evidence type="ECO:0000255" key="1">
    <source>
        <dbReference type="HAMAP-Rule" id="MF_00009"/>
    </source>
</evidence>
<keyword id="KW-0963">Cytoplasm</keyword>
<keyword id="KW-0255">Endonuclease</keyword>
<keyword id="KW-0378">Hydrolase</keyword>
<keyword id="KW-0479">Metal-binding</keyword>
<keyword id="KW-0540">Nuclease</keyword>
<keyword id="KW-0690">Ribosome biogenesis</keyword>
<keyword id="KW-0698">rRNA processing</keyword>
<keyword id="KW-0862">Zinc</keyword>
<organism>
    <name type="scientific">Rickettsia rickettsii (strain Iowa)</name>
    <dbReference type="NCBI Taxonomy" id="452659"/>
    <lineage>
        <taxon>Bacteria</taxon>
        <taxon>Pseudomonadati</taxon>
        <taxon>Pseudomonadota</taxon>
        <taxon>Alphaproteobacteria</taxon>
        <taxon>Rickettsiales</taxon>
        <taxon>Rickettsiaceae</taxon>
        <taxon>Rickettsieae</taxon>
        <taxon>Rickettsia</taxon>
        <taxon>spotted fever group</taxon>
    </lineage>
</organism>
<dbReference type="EC" id="3.1.-.-" evidence="1"/>
<dbReference type="EMBL" id="CP000766">
    <property type="protein sequence ID" value="ABY73084.1"/>
    <property type="molecule type" value="Genomic_DNA"/>
</dbReference>
<dbReference type="RefSeq" id="WP_012262576.1">
    <property type="nucleotide sequence ID" value="NC_010263.3"/>
</dbReference>
<dbReference type="SMR" id="B0BV24"/>
<dbReference type="KEGG" id="rrj:RrIowa_1350"/>
<dbReference type="eggNOG" id="COG0319">
    <property type="taxonomic scope" value="Bacteria"/>
</dbReference>
<dbReference type="HOGENOM" id="CLU_106710_0_0_5"/>
<dbReference type="Proteomes" id="UP000000796">
    <property type="component" value="Chromosome"/>
</dbReference>
<dbReference type="GO" id="GO:0005737">
    <property type="term" value="C:cytoplasm"/>
    <property type="evidence" value="ECO:0007669"/>
    <property type="project" value="UniProtKB-SubCell"/>
</dbReference>
<dbReference type="GO" id="GO:0004222">
    <property type="term" value="F:metalloendopeptidase activity"/>
    <property type="evidence" value="ECO:0007669"/>
    <property type="project" value="InterPro"/>
</dbReference>
<dbReference type="GO" id="GO:0004521">
    <property type="term" value="F:RNA endonuclease activity"/>
    <property type="evidence" value="ECO:0007669"/>
    <property type="project" value="UniProtKB-UniRule"/>
</dbReference>
<dbReference type="GO" id="GO:0008270">
    <property type="term" value="F:zinc ion binding"/>
    <property type="evidence" value="ECO:0007669"/>
    <property type="project" value="UniProtKB-UniRule"/>
</dbReference>
<dbReference type="GO" id="GO:0006364">
    <property type="term" value="P:rRNA processing"/>
    <property type="evidence" value="ECO:0007669"/>
    <property type="project" value="UniProtKB-UniRule"/>
</dbReference>
<dbReference type="Gene3D" id="3.40.390.30">
    <property type="entry name" value="Metalloproteases ('zincins'), catalytic domain"/>
    <property type="match status" value="1"/>
</dbReference>
<dbReference type="HAMAP" id="MF_00009">
    <property type="entry name" value="Endoribonucl_YbeY"/>
    <property type="match status" value="1"/>
</dbReference>
<dbReference type="InterPro" id="IPR023091">
    <property type="entry name" value="MetalPrtase_cat_dom_sf_prd"/>
</dbReference>
<dbReference type="InterPro" id="IPR002036">
    <property type="entry name" value="YbeY"/>
</dbReference>
<dbReference type="InterPro" id="IPR020549">
    <property type="entry name" value="YbeY_CS"/>
</dbReference>
<dbReference type="NCBIfam" id="TIGR00043">
    <property type="entry name" value="rRNA maturation RNase YbeY"/>
    <property type="match status" value="1"/>
</dbReference>
<dbReference type="PANTHER" id="PTHR46986">
    <property type="entry name" value="ENDORIBONUCLEASE YBEY, CHLOROPLASTIC"/>
    <property type="match status" value="1"/>
</dbReference>
<dbReference type="PANTHER" id="PTHR46986:SF1">
    <property type="entry name" value="ENDORIBONUCLEASE YBEY, CHLOROPLASTIC"/>
    <property type="match status" value="1"/>
</dbReference>
<dbReference type="Pfam" id="PF02130">
    <property type="entry name" value="YbeY"/>
    <property type="match status" value="1"/>
</dbReference>
<dbReference type="SUPFAM" id="SSF55486">
    <property type="entry name" value="Metalloproteases ('zincins'), catalytic domain"/>
    <property type="match status" value="1"/>
</dbReference>
<dbReference type="PROSITE" id="PS01306">
    <property type="entry name" value="UPF0054"/>
    <property type="match status" value="1"/>
</dbReference>